<keyword id="KW-0963">Cytoplasm</keyword>
<keyword id="KW-0269">Exonuclease</keyword>
<keyword id="KW-0378">Hydrolase</keyword>
<keyword id="KW-0540">Nuclease</keyword>
<sequence>MSEYLSVTTLTKYIKYKFDQDPHLQSILLKGELSNFKKHSSGHLYFNVKDKDSVISAMMFKGNANQLTFEPKEGDEVLLEARVSVYERRGNYQIYVNKMELDGIGNLYQKLEQLKQKLKKEGFFNNEHKKPIPRFPKKIAILTASTGAAIRDIQSTINSRYPLAEKIQISTLVQGTQAKEDIIKNIKYADSLGVDTIIVGRGGGSIEDLWNFNEEDVVKAIFECQTPIISAVGHETDFTLSDFVADVRAATPTQAAVMATPDQYELMQQIKQYQFSLSRYIKQYLEKQYKQLDHLASYYKFKQPSLLYDQQIQRKDDLERQLTQLLLSKIENKKYQLKVLHQNFNVKTLNQTILQNKRQLVNVKNRLSNLTMKNIHNNKLEFKNKVELLNNLSPTNTMLRGYSIINKDDKVITSTQDLSKDDEITLAMKDGNVDAIVKKVRCEHE</sequence>
<dbReference type="EC" id="3.1.11.6" evidence="1"/>
<dbReference type="EMBL" id="AP006716">
    <property type="protein sequence ID" value="BAE04701.1"/>
    <property type="molecule type" value="Genomic_DNA"/>
</dbReference>
<dbReference type="RefSeq" id="WP_011275688.1">
    <property type="nucleotide sequence ID" value="NC_007168.1"/>
</dbReference>
<dbReference type="SMR" id="Q4L6M4"/>
<dbReference type="KEGG" id="sha:SH1392"/>
<dbReference type="eggNOG" id="COG1570">
    <property type="taxonomic scope" value="Bacteria"/>
</dbReference>
<dbReference type="HOGENOM" id="CLU_023625_2_0_9"/>
<dbReference type="OrthoDB" id="9802795at2"/>
<dbReference type="Proteomes" id="UP000000543">
    <property type="component" value="Chromosome"/>
</dbReference>
<dbReference type="GO" id="GO:0005737">
    <property type="term" value="C:cytoplasm"/>
    <property type="evidence" value="ECO:0007669"/>
    <property type="project" value="UniProtKB-SubCell"/>
</dbReference>
<dbReference type="GO" id="GO:0009318">
    <property type="term" value="C:exodeoxyribonuclease VII complex"/>
    <property type="evidence" value="ECO:0007669"/>
    <property type="project" value="InterPro"/>
</dbReference>
<dbReference type="GO" id="GO:0008855">
    <property type="term" value="F:exodeoxyribonuclease VII activity"/>
    <property type="evidence" value="ECO:0007669"/>
    <property type="project" value="UniProtKB-UniRule"/>
</dbReference>
<dbReference type="GO" id="GO:0003676">
    <property type="term" value="F:nucleic acid binding"/>
    <property type="evidence" value="ECO:0007669"/>
    <property type="project" value="InterPro"/>
</dbReference>
<dbReference type="GO" id="GO:0006308">
    <property type="term" value="P:DNA catabolic process"/>
    <property type="evidence" value="ECO:0007669"/>
    <property type="project" value="UniProtKB-UniRule"/>
</dbReference>
<dbReference type="CDD" id="cd04489">
    <property type="entry name" value="ExoVII_LU_OBF"/>
    <property type="match status" value="1"/>
</dbReference>
<dbReference type="HAMAP" id="MF_00378">
    <property type="entry name" value="Exonuc_7_L"/>
    <property type="match status" value="1"/>
</dbReference>
<dbReference type="InterPro" id="IPR003753">
    <property type="entry name" value="Exonuc_VII_L"/>
</dbReference>
<dbReference type="InterPro" id="IPR020579">
    <property type="entry name" value="Exonuc_VII_lsu_C"/>
</dbReference>
<dbReference type="InterPro" id="IPR025824">
    <property type="entry name" value="OB-fold_nuc-bd_dom"/>
</dbReference>
<dbReference type="NCBIfam" id="TIGR00237">
    <property type="entry name" value="xseA"/>
    <property type="match status" value="1"/>
</dbReference>
<dbReference type="PANTHER" id="PTHR30008">
    <property type="entry name" value="EXODEOXYRIBONUCLEASE 7 LARGE SUBUNIT"/>
    <property type="match status" value="1"/>
</dbReference>
<dbReference type="PANTHER" id="PTHR30008:SF0">
    <property type="entry name" value="EXODEOXYRIBONUCLEASE 7 LARGE SUBUNIT"/>
    <property type="match status" value="1"/>
</dbReference>
<dbReference type="Pfam" id="PF02601">
    <property type="entry name" value="Exonuc_VII_L"/>
    <property type="match status" value="1"/>
</dbReference>
<dbReference type="Pfam" id="PF13742">
    <property type="entry name" value="tRNA_anti_2"/>
    <property type="match status" value="1"/>
</dbReference>
<protein>
    <recommendedName>
        <fullName evidence="1">Exodeoxyribonuclease 7 large subunit</fullName>
        <ecNumber evidence="1">3.1.11.6</ecNumber>
    </recommendedName>
    <alternativeName>
        <fullName evidence="1">Exodeoxyribonuclease VII large subunit</fullName>
        <shortName evidence="1">Exonuclease VII large subunit</shortName>
    </alternativeName>
</protein>
<name>EX7L_STAHJ</name>
<organism>
    <name type="scientific">Staphylococcus haemolyticus (strain JCSC1435)</name>
    <dbReference type="NCBI Taxonomy" id="279808"/>
    <lineage>
        <taxon>Bacteria</taxon>
        <taxon>Bacillati</taxon>
        <taxon>Bacillota</taxon>
        <taxon>Bacilli</taxon>
        <taxon>Bacillales</taxon>
        <taxon>Staphylococcaceae</taxon>
        <taxon>Staphylococcus</taxon>
    </lineage>
</organism>
<reference key="1">
    <citation type="journal article" date="2005" name="J. Bacteriol.">
        <title>Whole-genome sequencing of Staphylococcus haemolyticus uncovers the extreme plasticity of its genome and the evolution of human-colonizing staphylococcal species.</title>
        <authorList>
            <person name="Takeuchi F."/>
            <person name="Watanabe S."/>
            <person name="Baba T."/>
            <person name="Yuzawa H."/>
            <person name="Ito T."/>
            <person name="Morimoto Y."/>
            <person name="Kuroda M."/>
            <person name="Cui L."/>
            <person name="Takahashi M."/>
            <person name="Ankai A."/>
            <person name="Baba S."/>
            <person name="Fukui S."/>
            <person name="Lee J.C."/>
            <person name="Hiramatsu K."/>
        </authorList>
    </citation>
    <scope>NUCLEOTIDE SEQUENCE [LARGE SCALE GENOMIC DNA]</scope>
    <source>
        <strain>JCSC1435</strain>
    </source>
</reference>
<proteinExistence type="inferred from homology"/>
<comment type="function">
    <text evidence="1">Bidirectionally degrades single-stranded DNA into large acid-insoluble oligonucleotides, which are then degraded further into small acid-soluble oligonucleotides.</text>
</comment>
<comment type="catalytic activity">
    <reaction evidence="1">
        <text>Exonucleolytic cleavage in either 5'- to 3'- or 3'- to 5'-direction to yield nucleoside 5'-phosphates.</text>
        <dbReference type="EC" id="3.1.11.6"/>
    </reaction>
</comment>
<comment type="subunit">
    <text evidence="1">Heterooligomer composed of large and small subunits.</text>
</comment>
<comment type="subcellular location">
    <subcellularLocation>
        <location evidence="1">Cytoplasm</location>
    </subcellularLocation>
</comment>
<comment type="similarity">
    <text evidence="1">Belongs to the XseA family.</text>
</comment>
<feature type="chain" id="PRO_0000197885" description="Exodeoxyribonuclease 7 large subunit">
    <location>
        <begin position="1"/>
        <end position="445"/>
    </location>
</feature>
<gene>
    <name evidence="1" type="primary">xseA</name>
    <name type="ordered locus">SH1392</name>
</gene>
<evidence type="ECO:0000255" key="1">
    <source>
        <dbReference type="HAMAP-Rule" id="MF_00378"/>
    </source>
</evidence>
<accession>Q4L6M4</accession>